<proteinExistence type="inferred from homology"/>
<reference key="1">
    <citation type="submission" date="2005-09" db="EMBL/GenBank/DDBJ databases">
        <title>Complete sequence of chromosome 1 of Rhodobacter sphaeroides 2.4.1.</title>
        <authorList>
            <person name="Copeland A."/>
            <person name="Lucas S."/>
            <person name="Lapidus A."/>
            <person name="Barry K."/>
            <person name="Detter J.C."/>
            <person name="Glavina T."/>
            <person name="Hammon N."/>
            <person name="Israni S."/>
            <person name="Pitluck S."/>
            <person name="Richardson P."/>
            <person name="Mackenzie C."/>
            <person name="Choudhary M."/>
            <person name="Larimer F."/>
            <person name="Hauser L.J."/>
            <person name="Land M."/>
            <person name="Donohue T.J."/>
            <person name="Kaplan S."/>
        </authorList>
    </citation>
    <scope>NUCLEOTIDE SEQUENCE [LARGE SCALE GENOMIC DNA]</scope>
    <source>
        <strain>ATCC 17023 / DSM 158 / JCM 6121 / CCUG 31486 / LMG 2827 / NBRC 12203 / NCIMB 8253 / ATH 2.4.1.</strain>
    </source>
</reference>
<comment type="function">
    <text evidence="1">Responsible for the release of ribosomes from messenger RNA at the termination of protein biosynthesis. May increase the efficiency of translation by recycling ribosomes from one round of translation to another.</text>
</comment>
<comment type="subcellular location">
    <subcellularLocation>
        <location evidence="1">Cytoplasm</location>
    </subcellularLocation>
</comment>
<comment type="similarity">
    <text evidence="1">Belongs to the RRF family.</text>
</comment>
<evidence type="ECO:0000255" key="1">
    <source>
        <dbReference type="HAMAP-Rule" id="MF_00040"/>
    </source>
</evidence>
<feature type="chain" id="PRO_0000341031" description="Ribosome-recycling factor">
    <location>
        <begin position="1"/>
        <end position="188"/>
    </location>
</feature>
<gene>
    <name evidence="1" type="primary">frr</name>
    <name type="ordered locus">RHOS4_12920</name>
    <name type="ORF">RSP_2706</name>
</gene>
<accession>Q3J2X4</accession>
<name>RRF_CERS4</name>
<dbReference type="EMBL" id="CP000143">
    <property type="protein sequence ID" value="ABA78860.1"/>
    <property type="molecule type" value="Genomic_DNA"/>
</dbReference>
<dbReference type="RefSeq" id="WP_011337674.1">
    <property type="nucleotide sequence ID" value="NC_007493.2"/>
</dbReference>
<dbReference type="RefSeq" id="YP_352761.1">
    <property type="nucleotide sequence ID" value="NC_007493.2"/>
</dbReference>
<dbReference type="SMR" id="Q3J2X4"/>
<dbReference type="STRING" id="272943.RSP_2706"/>
<dbReference type="EnsemblBacteria" id="ABA78860">
    <property type="protein sequence ID" value="ABA78860"/>
    <property type="gene ID" value="RSP_2706"/>
</dbReference>
<dbReference type="GeneID" id="3720435"/>
<dbReference type="KEGG" id="rsp:RSP_2706"/>
<dbReference type="PATRIC" id="fig|272943.9.peg.1632"/>
<dbReference type="eggNOG" id="COG0233">
    <property type="taxonomic scope" value="Bacteria"/>
</dbReference>
<dbReference type="OrthoDB" id="9804006at2"/>
<dbReference type="PhylomeDB" id="Q3J2X4"/>
<dbReference type="Proteomes" id="UP000002703">
    <property type="component" value="Chromosome 1"/>
</dbReference>
<dbReference type="GO" id="GO:0005829">
    <property type="term" value="C:cytosol"/>
    <property type="evidence" value="ECO:0007669"/>
    <property type="project" value="GOC"/>
</dbReference>
<dbReference type="GO" id="GO:0043023">
    <property type="term" value="F:ribosomal large subunit binding"/>
    <property type="evidence" value="ECO:0007669"/>
    <property type="project" value="TreeGrafter"/>
</dbReference>
<dbReference type="GO" id="GO:0002184">
    <property type="term" value="P:cytoplasmic translational termination"/>
    <property type="evidence" value="ECO:0007669"/>
    <property type="project" value="TreeGrafter"/>
</dbReference>
<dbReference type="CDD" id="cd00520">
    <property type="entry name" value="RRF"/>
    <property type="match status" value="1"/>
</dbReference>
<dbReference type="FunFam" id="1.10.132.20:FF:000001">
    <property type="entry name" value="Ribosome-recycling factor"/>
    <property type="match status" value="1"/>
</dbReference>
<dbReference type="FunFam" id="3.30.1360.40:FF:000001">
    <property type="entry name" value="Ribosome-recycling factor"/>
    <property type="match status" value="1"/>
</dbReference>
<dbReference type="Gene3D" id="3.30.1360.40">
    <property type="match status" value="1"/>
</dbReference>
<dbReference type="Gene3D" id="1.10.132.20">
    <property type="entry name" value="Ribosome-recycling factor"/>
    <property type="match status" value="1"/>
</dbReference>
<dbReference type="HAMAP" id="MF_00040">
    <property type="entry name" value="RRF"/>
    <property type="match status" value="1"/>
</dbReference>
<dbReference type="InterPro" id="IPR002661">
    <property type="entry name" value="Ribosome_recyc_fac"/>
</dbReference>
<dbReference type="InterPro" id="IPR023584">
    <property type="entry name" value="Ribosome_recyc_fac_dom"/>
</dbReference>
<dbReference type="InterPro" id="IPR036191">
    <property type="entry name" value="RRF_sf"/>
</dbReference>
<dbReference type="NCBIfam" id="TIGR00496">
    <property type="entry name" value="frr"/>
    <property type="match status" value="1"/>
</dbReference>
<dbReference type="PANTHER" id="PTHR20982:SF3">
    <property type="entry name" value="MITOCHONDRIAL RIBOSOME RECYCLING FACTOR PSEUDO 1"/>
    <property type="match status" value="1"/>
</dbReference>
<dbReference type="PANTHER" id="PTHR20982">
    <property type="entry name" value="RIBOSOME RECYCLING FACTOR"/>
    <property type="match status" value="1"/>
</dbReference>
<dbReference type="Pfam" id="PF01765">
    <property type="entry name" value="RRF"/>
    <property type="match status" value="1"/>
</dbReference>
<dbReference type="SUPFAM" id="SSF55194">
    <property type="entry name" value="Ribosome recycling factor, RRF"/>
    <property type="match status" value="1"/>
</dbReference>
<protein>
    <recommendedName>
        <fullName evidence="1">Ribosome-recycling factor</fullName>
        <shortName evidence="1">RRF</shortName>
    </recommendedName>
    <alternativeName>
        <fullName evidence="1">Ribosome-releasing factor</fullName>
    </alternativeName>
</protein>
<organism>
    <name type="scientific">Cereibacter sphaeroides (strain ATCC 17023 / DSM 158 / JCM 6121 / CCUG 31486 / LMG 2827 / NBRC 12203 / NCIMB 8253 / ATH 2.4.1.)</name>
    <name type="common">Rhodobacter sphaeroides</name>
    <dbReference type="NCBI Taxonomy" id="272943"/>
    <lineage>
        <taxon>Bacteria</taxon>
        <taxon>Pseudomonadati</taxon>
        <taxon>Pseudomonadota</taxon>
        <taxon>Alphaproteobacteria</taxon>
        <taxon>Rhodobacterales</taxon>
        <taxon>Paracoccaceae</taxon>
        <taxon>Cereibacter</taxon>
    </lineage>
</organism>
<keyword id="KW-0963">Cytoplasm</keyword>
<keyword id="KW-0648">Protein biosynthesis</keyword>
<keyword id="KW-1185">Reference proteome</keyword>
<sequence length="188" mass="21022">MSQDDLEIDLDAIQRRMDGAMHALRTEFGSLRTGRASASILEPIHVDAYGQQTPLNQLGTINVPEPRMVVINVWDKGMISKVERAIRDSGIGINPVVDGPIIRLPIPELNEERRKELSKVAAHYAEQARVAIRNVRRDGMDQIKKAKSVGMAEDDQKMWSDEVQALTDKAIAAVDKALEEKQKEIMQV</sequence>